<protein>
    <recommendedName>
        <fullName>Protein PRRC2A</fullName>
    </recommendedName>
    <alternativeName>
        <fullName>HLA-B-associated transcript 2</fullName>
    </alternativeName>
    <alternativeName>
        <fullName>Large proline-rich protein BAT2</fullName>
    </alternativeName>
    <alternativeName>
        <fullName>Proline-rich and coiled-coil-containing protein 2A</fullName>
    </alternativeName>
    <alternativeName>
        <fullName>Protein G2</fullName>
    </alternativeName>
</protein>
<gene>
    <name type="primary">PRRC2A</name>
    <name type="synonym">BAT2</name>
    <name type="synonym">G2</name>
</gene>
<name>PRC2A_HUMAN</name>
<sequence>MSDRSGPTAKGKDGKKYSSLNLFDTYKGKSLEIQKPAVAPRHGLQSLGKVAIARRMPPPANLPSLKAENKGNDPNVSLVPKDGTGWASKQEQSDPKSSDASTAQPPESQPLPASQTPASNQPKRPPAAPENTPLVPSGVKSWAQASVTHGAHGDGGRASSLLSRFSREEFPTLQAAGDQDKAAKERESAEQSSGPGPSLRPQNSTTWRDGGGRGPDELEGPDSKLHHGHDPRGGLQPSGPPQFPPYRGMMPPFMYPPYLPFPPPYGPQGPYRYPTPDGPSRFPRVAGPRGSGPPMRLVEPVGRPSILKEDNLKEFDQLDQENDDGWAGAHEEVDYTEKLKFSDEEDGRDSDEEGAEGHRDSQSASGEERPPEADGKKGNSPNSEPPTPKTAWAETSRPPETEPGPPAPKPPLPPPHRGPAGNWGPPGDYPDRGGPPCKPPAPEDEDEAWRQRRKQSSSEISLAVERARRRREEEERRMQEERRAACAEKLKRLDEKFGAPDKRLKAEPAAPPAAPSTPAPPPAVPKELPAPPAPPPASAPTPETEPEEPAQAPPAQSTPTPGVAAAPTLVSGGGSTSSTSSGSFEASPVEPQLPSKEGPEPPEEVPPPTTPPVPKVEPKGDGIGPTRQPPSQGLGYPKYQKSLPPRFQRQQQEQLLKQQQQHQWQQHQQGSAPPTPVPPSPPQPVTLGAVPAPQAPPPPPKALYPGALGRPPPMPPMNFDPRWMMIPPYVDPRLLQGRPPLDFYPPGVHPSGLVPRERSDSGGSSSEPFDRHAPAMLRERGTPPVDPKLAWVGDVFTATPAEPRPLTSPLRQAADEDDKGMRSETPPVPPPPPYLASYPGFPENGAPGPPISRFPLEEPGPRPLPWPPGSDEVAKIQTPPPKKEPPKEETAQLTGPEAGRKPARGVGSGGQGPPPPRRESRTETRWGPRPGSSRRGIPPEEPGAPPRRAGPIKKPPPPTKVEELPPKPLEQGDETPKPPKPDPLKITKGKLGGPKETPPNGNLSPAPRLRRDYSYERVGPTSCRGRGRGEYFARGRGFRGTYGGRGRGARSREFRSYREFRGDDGRGGGTGGPNHPPAPRGRTASETRSEGSEYEEIPKRRRQRGSETGSETHESDLAPSDKEAPTPKEGTLTQVPLAPPPPGAPPSPAPARFTARGGRVFTPRGVPSRRGRGGGRPPPQVCPGWSPPAKSLAPKKPPTGPLPPSKEPLKEKLIPGPLSPVARGGSNGGSNVGMEDGERPRRRRHGRAQQQDKPPRFRRLKQERENAARGSEGKPSLTLPASAPGPEEALTTVTVAPAPRRAAAKSPDLSNQNSDQANEEWETASESSDFTSERRGDKEAPPPVLLTPKAVGTPGGGGGGAVPGISAMSRGDLSQRAKDLSKRSFSSQRPGMERQNRRPGPGGKAGSSGSSSGGGGGGPGGRTGPGRGDKRSWPSPKNRSRPPEERPPGLPLPPPPPSSSAVFRLDQVIHSNPAGIQQALAQLSSRQGSVTAPGGHPRHKPGLPQAPQGPSPRPPTRYEPQRVNSGLSSDPHFEEPGPMVRGVGGTPRDSAGVSPFPPKRRERPPRKPELLQEESLPPPHSSGFLGSKPEGPGPQAESRDTGTEALTPHIWNRLHTATSRKSYRPSSMEPWMEPLSPFEDVAGTEMSQSDSGVDLSGDSQVSSGPCSQRSSPDGGLKGAAEGPPKRPGGSSPLNAVPCEGPPGSEPPRRPPPAPHDGDRKELPREQPLPPGPIGTERSQRTDRGTEPGPIRPSHRPGPPVQFGTSDKDSDLRLVVGDSLKAEKELTASVTEAIPVSRDWELLPSAAASAEPQSKNLDSGHCVPEPSSSGQRLYPEVFYGSAGPSSSQISGGAMDSQLHPNSGGFRPGTPSLHPYRSQPLYLPPGPAPPSALLSGLALKGQFLDFSTMQATELGKLPAGGVLYPPPSFLYSPAFCPSPLPDTSLLQVRQDLPSPSDFYSTPLQPGGQSGFLPSGAPAQQMLLPMVDSQLPVVNFGSLPPAPPPAPPPLSLLPVGPALQPPSLAVRPPPAPATRVLPSPARPFPASLGRAELHPVELKPFQDYQKLSSNLGGPGSSRTPPTGRSFSGLNSRLKATPSTYSGVFRTQRVDLYQQASPPDALRWIPKPWERTGPPPREGPSRRAEEPGSRGDKEPGLPPPR</sequence>
<reference key="1">
    <citation type="journal article" date="1990" name="Proc. Natl. Acad. Sci. U.S.A.">
        <title>A gene pair from the human major histocompatibility complex encodes large proline-rich proteins with multiple repeated motifs and a single ubiquitin-like domain.</title>
        <authorList>
            <person name="Banerji J."/>
            <person name="Sands J."/>
            <person name="Strominger J.L."/>
            <person name="Spies T."/>
        </authorList>
    </citation>
    <scope>NUCLEOTIDE SEQUENCE [GENOMIC DNA / MRNA] (ISOFORM 2)</scope>
    <scope>VARIANTS ARG-57; GLU-742; PRO-1503 AND VAL-1895</scope>
    <source>
        <tissue>T-cell</tissue>
    </source>
</reference>
<reference key="2">
    <citation type="journal article" date="2004" name="Nat. Genet.">
        <title>Complete sequencing and characterization of 21,243 full-length human cDNAs.</title>
        <authorList>
            <person name="Ota T."/>
            <person name="Suzuki Y."/>
            <person name="Nishikawa T."/>
            <person name="Otsuki T."/>
            <person name="Sugiyama T."/>
            <person name="Irie R."/>
            <person name="Wakamatsu A."/>
            <person name="Hayashi K."/>
            <person name="Sato H."/>
            <person name="Nagai K."/>
            <person name="Kimura K."/>
            <person name="Makita H."/>
            <person name="Sekine M."/>
            <person name="Obayashi M."/>
            <person name="Nishi T."/>
            <person name="Shibahara T."/>
            <person name="Tanaka T."/>
            <person name="Ishii S."/>
            <person name="Yamamoto J."/>
            <person name="Saito K."/>
            <person name="Kawai Y."/>
            <person name="Isono Y."/>
            <person name="Nakamura Y."/>
            <person name="Nagahari K."/>
            <person name="Murakami K."/>
            <person name="Yasuda T."/>
            <person name="Iwayanagi T."/>
            <person name="Wagatsuma M."/>
            <person name="Shiratori A."/>
            <person name="Sudo H."/>
            <person name="Hosoiri T."/>
            <person name="Kaku Y."/>
            <person name="Kodaira H."/>
            <person name="Kondo H."/>
            <person name="Sugawara M."/>
            <person name="Takahashi M."/>
            <person name="Kanda K."/>
            <person name="Yokoi T."/>
            <person name="Furuya T."/>
            <person name="Kikkawa E."/>
            <person name="Omura Y."/>
            <person name="Abe K."/>
            <person name="Kamihara K."/>
            <person name="Katsuta N."/>
            <person name="Sato K."/>
            <person name="Tanikawa M."/>
            <person name="Yamazaki M."/>
            <person name="Ninomiya K."/>
            <person name="Ishibashi T."/>
            <person name="Yamashita H."/>
            <person name="Murakawa K."/>
            <person name="Fujimori K."/>
            <person name="Tanai H."/>
            <person name="Kimata M."/>
            <person name="Watanabe M."/>
            <person name="Hiraoka S."/>
            <person name="Chiba Y."/>
            <person name="Ishida S."/>
            <person name="Ono Y."/>
            <person name="Takiguchi S."/>
            <person name="Watanabe S."/>
            <person name="Yosida M."/>
            <person name="Hotuta T."/>
            <person name="Kusano J."/>
            <person name="Kanehori K."/>
            <person name="Takahashi-Fujii A."/>
            <person name="Hara H."/>
            <person name="Tanase T.-O."/>
            <person name="Nomura Y."/>
            <person name="Togiya S."/>
            <person name="Komai F."/>
            <person name="Hara R."/>
            <person name="Takeuchi K."/>
            <person name="Arita M."/>
            <person name="Imose N."/>
            <person name="Musashino K."/>
            <person name="Yuuki H."/>
            <person name="Oshima A."/>
            <person name="Sasaki N."/>
            <person name="Aotsuka S."/>
            <person name="Yoshikawa Y."/>
            <person name="Matsunawa H."/>
            <person name="Ichihara T."/>
            <person name="Shiohata N."/>
            <person name="Sano S."/>
            <person name="Moriya S."/>
            <person name="Momiyama H."/>
            <person name="Satoh N."/>
            <person name="Takami S."/>
            <person name="Terashima Y."/>
            <person name="Suzuki O."/>
            <person name="Nakagawa S."/>
            <person name="Senoh A."/>
            <person name="Mizoguchi H."/>
            <person name="Goto Y."/>
            <person name="Shimizu F."/>
            <person name="Wakebe H."/>
            <person name="Hishigaki H."/>
            <person name="Watanabe T."/>
            <person name="Sugiyama A."/>
            <person name="Takemoto M."/>
            <person name="Kawakami B."/>
            <person name="Yamazaki M."/>
            <person name="Watanabe K."/>
            <person name="Kumagai A."/>
            <person name="Itakura S."/>
            <person name="Fukuzumi Y."/>
            <person name="Fujimori Y."/>
            <person name="Komiyama M."/>
            <person name="Tashiro H."/>
            <person name="Tanigami A."/>
            <person name="Fujiwara T."/>
            <person name="Ono T."/>
            <person name="Yamada K."/>
            <person name="Fujii Y."/>
            <person name="Ozaki K."/>
            <person name="Hirao M."/>
            <person name="Ohmori Y."/>
            <person name="Kawabata A."/>
            <person name="Hikiji T."/>
            <person name="Kobatake N."/>
            <person name="Inagaki H."/>
            <person name="Ikema Y."/>
            <person name="Okamoto S."/>
            <person name="Okitani R."/>
            <person name="Kawakami T."/>
            <person name="Noguchi S."/>
            <person name="Itoh T."/>
            <person name="Shigeta K."/>
            <person name="Senba T."/>
            <person name="Matsumura K."/>
            <person name="Nakajima Y."/>
            <person name="Mizuno T."/>
            <person name="Morinaga M."/>
            <person name="Sasaki M."/>
            <person name="Togashi T."/>
            <person name="Oyama M."/>
            <person name="Hata H."/>
            <person name="Watanabe M."/>
            <person name="Komatsu T."/>
            <person name="Mizushima-Sugano J."/>
            <person name="Satoh T."/>
            <person name="Shirai Y."/>
            <person name="Takahashi Y."/>
            <person name="Nakagawa K."/>
            <person name="Okumura K."/>
            <person name="Nagase T."/>
            <person name="Nomura N."/>
            <person name="Kikuchi H."/>
            <person name="Masuho Y."/>
            <person name="Yamashita R."/>
            <person name="Nakai K."/>
            <person name="Yada T."/>
            <person name="Nakamura Y."/>
            <person name="Ohara O."/>
            <person name="Isogai T."/>
            <person name="Sugano S."/>
        </authorList>
    </citation>
    <scope>NUCLEOTIDE SEQUENCE [LARGE SCALE MRNA] (ISOFORM 4)</scope>
    <scope>VARIANTS LEU-106; LYS-544; PRO-1503 AND VAL-1895</scope>
    <source>
        <tissue>Brain</tissue>
    </source>
</reference>
<reference key="3">
    <citation type="journal article" date="2003" name="Genome Res.">
        <title>Analysis of the gene-dense major histocompatibility complex class III region and its comparison to mouse.</title>
        <authorList>
            <person name="Xie T."/>
            <person name="Rowen L."/>
            <person name="Aguado B."/>
            <person name="Ahearn M.E."/>
            <person name="Madan A."/>
            <person name="Qin S."/>
            <person name="Campbell R.D."/>
            <person name="Hood L."/>
        </authorList>
    </citation>
    <scope>NUCLEOTIDE SEQUENCE [LARGE SCALE GENOMIC DNA]</scope>
    <scope>VARIANTS LYS-544; ALA-1285; PRO-1503; HIS-1740; VAL-1895 AND LEU-2130</scope>
</reference>
<reference key="4">
    <citation type="submission" date="1999-09" db="EMBL/GenBank/DDBJ databases">
        <title>Homo sapiens 2,229,817bp genomic DNA of 6p21.3 HLA class I region.</title>
        <authorList>
            <person name="Shiina S."/>
            <person name="Tamiya G."/>
            <person name="Oka A."/>
            <person name="Inoko H."/>
        </authorList>
    </citation>
    <scope>NUCLEOTIDE SEQUENCE [LARGE SCALE GENOMIC DNA]</scope>
    <scope>VARIANTS LYS-544; PRO-1503 AND VAL-1895</scope>
</reference>
<reference key="5">
    <citation type="journal article" date="2003" name="Nature">
        <title>The DNA sequence and analysis of human chromosome 6.</title>
        <authorList>
            <person name="Mungall A.J."/>
            <person name="Palmer S.A."/>
            <person name="Sims S.K."/>
            <person name="Edwards C.A."/>
            <person name="Ashurst J.L."/>
            <person name="Wilming L."/>
            <person name="Jones M.C."/>
            <person name="Horton R."/>
            <person name="Hunt S.E."/>
            <person name="Scott C.E."/>
            <person name="Gilbert J.G.R."/>
            <person name="Clamp M.E."/>
            <person name="Bethel G."/>
            <person name="Milne S."/>
            <person name="Ainscough R."/>
            <person name="Almeida J.P."/>
            <person name="Ambrose K.D."/>
            <person name="Andrews T.D."/>
            <person name="Ashwell R.I.S."/>
            <person name="Babbage A.K."/>
            <person name="Bagguley C.L."/>
            <person name="Bailey J."/>
            <person name="Banerjee R."/>
            <person name="Barker D.J."/>
            <person name="Barlow K.F."/>
            <person name="Bates K."/>
            <person name="Beare D.M."/>
            <person name="Beasley H."/>
            <person name="Beasley O."/>
            <person name="Bird C.P."/>
            <person name="Blakey S.E."/>
            <person name="Bray-Allen S."/>
            <person name="Brook J."/>
            <person name="Brown A.J."/>
            <person name="Brown J.Y."/>
            <person name="Burford D.C."/>
            <person name="Burrill W."/>
            <person name="Burton J."/>
            <person name="Carder C."/>
            <person name="Carter N.P."/>
            <person name="Chapman J.C."/>
            <person name="Clark S.Y."/>
            <person name="Clark G."/>
            <person name="Clee C.M."/>
            <person name="Clegg S."/>
            <person name="Cobley V."/>
            <person name="Collier R.E."/>
            <person name="Collins J.E."/>
            <person name="Colman L.K."/>
            <person name="Corby N.R."/>
            <person name="Coville G.J."/>
            <person name="Culley K.M."/>
            <person name="Dhami P."/>
            <person name="Davies J."/>
            <person name="Dunn M."/>
            <person name="Earthrowl M.E."/>
            <person name="Ellington A.E."/>
            <person name="Evans K.A."/>
            <person name="Faulkner L."/>
            <person name="Francis M.D."/>
            <person name="Frankish A."/>
            <person name="Frankland J."/>
            <person name="French L."/>
            <person name="Garner P."/>
            <person name="Garnett J."/>
            <person name="Ghori M.J."/>
            <person name="Gilby L.M."/>
            <person name="Gillson C.J."/>
            <person name="Glithero R.J."/>
            <person name="Grafham D.V."/>
            <person name="Grant M."/>
            <person name="Gribble S."/>
            <person name="Griffiths C."/>
            <person name="Griffiths M.N.D."/>
            <person name="Hall R."/>
            <person name="Halls K.S."/>
            <person name="Hammond S."/>
            <person name="Harley J.L."/>
            <person name="Hart E.A."/>
            <person name="Heath P.D."/>
            <person name="Heathcott R."/>
            <person name="Holmes S.J."/>
            <person name="Howden P.J."/>
            <person name="Howe K.L."/>
            <person name="Howell G.R."/>
            <person name="Huckle E."/>
            <person name="Humphray S.J."/>
            <person name="Humphries M.D."/>
            <person name="Hunt A.R."/>
            <person name="Johnson C.M."/>
            <person name="Joy A.A."/>
            <person name="Kay M."/>
            <person name="Keenan S.J."/>
            <person name="Kimberley A.M."/>
            <person name="King A."/>
            <person name="Laird G.K."/>
            <person name="Langford C."/>
            <person name="Lawlor S."/>
            <person name="Leongamornlert D.A."/>
            <person name="Leversha M."/>
            <person name="Lloyd C.R."/>
            <person name="Lloyd D.M."/>
            <person name="Loveland J.E."/>
            <person name="Lovell J."/>
            <person name="Martin S."/>
            <person name="Mashreghi-Mohammadi M."/>
            <person name="Maslen G.L."/>
            <person name="Matthews L."/>
            <person name="McCann O.T."/>
            <person name="McLaren S.J."/>
            <person name="McLay K."/>
            <person name="McMurray A."/>
            <person name="Moore M.J.F."/>
            <person name="Mullikin J.C."/>
            <person name="Niblett D."/>
            <person name="Nickerson T."/>
            <person name="Novik K.L."/>
            <person name="Oliver K."/>
            <person name="Overton-Larty E.K."/>
            <person name="Parker A."/>
            <person name="Patel R."/>
            <person name="Pearce A.V."/>
            <person name="Peck A.I."/>
            <person name="Phillimore B.J.C.T."/>
            <person name="Phillips S."/>
            <person name="Plumb R.W."/>
            <person name="Porter K.M."/>
            <person name="Ramsey Y."/>
            <person name="Ranby S.A."/>
            <person name="Rice C.M."/>
            <person name="Ross M.T."/>
            <person name="Searle S.M."/>
            <person name="Sehra H.K."/>
            <person name="Sheridan E."/>
            <person name="Skuce C.D."/>
            <person name="Smith S."/>
            <person name="Smith M."/>
            <person name="Spraggon L."/>
            <person name="Squares S.L."/>
            <person name="Steward C.A."/>
            <person name="Sycamore N."/>
            <person name="Tamlyn-Hall G."/>
            <person name="Tester J."/>
            <person name="Theaker A.J."/>
            <person name="Thomas D.W."/>
            <person name="Thorpe A."/>
            <person name="Tracey A."/>
            <person name="Tromans A."/>
            <person name="Tubby B."/>
            <person name="Wall M."/>
            <person name="Wallis J.M."/>
            <person name="West A.P."/>
            <person name="White S.S."/>
            <person name="Whitehead S.L."/>
            <person name="Whittaker H."/>
            <person name="Wild A."/>
            <person name="Willey D.J."/>
            <person name="Wilmer T.E."/>
            <person name="Wood J.M."/>
            <person name="Wray P.W."/>
            <person name="Wyatt J.C."/>
            <person name="Young L."/>
            <person name="Younger R.M."/>
            <person name="Bentley D.R."/>
            <person name="Coulson A."/>
            <person name="Durbin R.M."/>
            <person name="Hubbard T."/>
            <person name="Sulston J.E."/>
            <person name="Dunham I."/>
            <person name="Rogers J."/>
            <person name="Beck S."/>
        </authorList>
    </citation>
    <scope>NUCLEOTIDE SEQUENCE [LARGE SCALE GENOMIC DNA]</scope>
    <scope>VARIANTS LEU-106; LYS-544; PRO-1503; HIS-1740; VAL-1895 AND SER-2006</scope>
</reference>
<reference key="6">
    <citation type="submission" date="2005-07" db="EMBL/GenBank/DDBJ databases">
        <authorList>
            <person name="Mural R.J."/>
            <person name="Istrail S."/>
            <person name="Sutton G.G."/>
            <person name="Florea L."/>
            <person name="Halpern A.L."/>
            <person name="Mobarry C.M."/>
            <person name="Lippert R."/>
            <person name="Walenz B."/>
            <person name="Shatkay H."/>
            <person name="Dew I."/>
            <person name="Miller J.R."/>
            <person name="Flanigan M.J."/>
            <person name="Edwards N.J."/>
            <person name="Bolanos R."/>
            <person name="Fasulo D."/>
            <person name="Halldorsson B.V."/>
            <person name="Hannenhalli S."/>
            <person name="Turner R."/>
            <person name="Yooseph S."/>
            <person name="Lu F."/>
            <person name="Nusskern D.R."/>
            <person name="Shue B.C."/>
            <person name="Zheng X.H."/>
            <person name="Zhong F."/>
            <person name="Delcher A.L."/>
            <person name="Huson D.H."/>
            <person name="Kravitz S.A."/>
            <person name="Mouchard L."/>
            <person name="Reinert K."/>
            <person name="Remington K.A."/>
            <person name="Clark A.G."/>
            <person name="Waterman M.S."/>
            <person name="Eichler E.E."/>
            <person name="Adams M.D."/>
            <person name="Hunkapiller M.W."/>
            <person name="Myers E.W."/>
            <person name="Venter J.C."/>
        </authorList>
    </citation>
    <scope>NUCLEOTIDE SEQUENCE [LARGE SCALE GENOMIC DNA]</scope>
    <scope>VARIANTS LYS-544; PRO-1503; HIS-1740 AND VAL-1895</scope>
</reference>
<reference key="7">
    <citation type="journal article" date="2004" name="Genome Res.">
        <title>The status, quality, and expansion of the NIH full-length cDNA project: the Mammalian Gene Collection (MGC).</title>
        <authorList>
            <consortium name="The MGC Project Team"/>
        </authorList>
    </citation>
    <scope>NUCLEOTIDE SEQUENCE [LARGE SCALE MRNA] (ISOFORM 1)</scope>
    <scope>VARIANTS CYS-477; LYS-544; PRO-1503 AND VAL-1895</scope>
    <source>
        <tissue>Lymph</tissue>
        <tissue>Placenta</tissue>
        <tissue>Uterus</tissue>
    </source>
</reference>
<reference key="8">
    <citation type="journal article" date="1993" name="Nat. Genet.">
        <title>Dense Alu clustering and a potential new member of the NF kappa B family within a 90 kilobase HLA class III segment.</title>
        <authorList>
            <person name="Iris F.J.M."/>
            <person name="Bougueleret L."/>
            <person name="Prieur S."/>
            <person name="Caterina D."/>
            <person name="Primas G."/>
            <person name="Perrot V."/>
            <person name="Jurka J."/>
            <person name="Rodriguez-Tome P."/>
            <person name="Claverie J.-M."/>
            <person name="Dausset J."/>
            <person name="Cohen D."/>
        </authorList>
    </citation>
    <scope>NUCLEOTIDE SEQUENCE [GENOMIC DNA] OF 1-1874 (ISOFORM 3)</scope>
    <scope>VARIANTS LYS-544; LYS-694; ALA-1415; PRO-1503 AND ALA-1744</scope>
</reference>
<reference key="9">
    <citation type="journal article" date="2007" name="BMC Genomics">
        <title>The full-ORF clone resource of the German cDNA consortium.</title>
        <authorList>
            <person name="Bechtel S."/>
            <person name="Rosenfelder H."/>
            <person name="Duda A."/>
            <person name="Schmidt C.P."/>
            <person name="Ernst U."/>
            <person name="Wellenreuther R."/>
            <person name="Mehrle A."/>
            <person name="Schuster C."/>
            <person name="Bahr A."/>
            <person name="Bloecker H."/>
            <person name="Heubner D."/>
            <person name="Hoerlein A."/>
            <person name="Michel G."/>
            <person name="Wedler H."/>
            <person name="Koehrer K."/>
            <person name="Ottenwaelder B."/>
            <person name="Poustka A."/>
            <person name="Wiemann S."/>
            <person name="Schupp I."/>
        </authorList>
    </citation>
    <scope>NUCLEOTIDE SEQUENCE [LARGE SCALE MRNA] OF 871-2157 (ISOFORM 1)</scope>
    <scope>VARIANTS PRO-1503 AND VAL-1895</scope>
    <source>
        <tissue>Uterine endothelium</tissue>
    </source>
</reference>
<reference key="10">
    <citation type="journal article" date="2004" name="Genomics">
        <title>Analysis of a high-throughput yeast two-hybrid system and its use to predict the function of intracellular proteins encoded within the human MHC class III region.</title>
        <authorList>
            <person name="Lehner B."/>
            <person name="Semple J.I."/>
            <person name="Brown S.E."/>
            <person name="Counsell D."/>
            <person name="Campbell R.D."/>
            <person name="Sanderson C.M."/>
        </authorList>
    </citation>
    <scope>FUNCTION</scope>
</reference>
<reference key="11">
    <citation type="journal article" date="2005" name="Vaccine">
        <title>Antibodies generated by a novel DNA vaccination identify the MHC class III encoded BAT2 polypeptide.</title>
        <authorList>
            <person name="Schneiders A."/>
            <person name="Thiel S."/>
            <person name="Winkler J."/>
            <person name="Moeller P."/>
            <person name="Koch N."/>
        </authorList>
    </citation>
    <scope>SUBCELLULAR LOCATION</scope>
    <scope>DEVELOPMENTAL STAGE</scope>
</reference>
<reference key="12">
    <citation type="journal article" date="2006" name="Cell">
        <title>Global, in vivo, and site-specific phosphorylation dynamics in signaling networks.</title>
        <authorList>
            <person name="Olsen J.V."/>
            <person name="Blagoev B."/>
            <person name="Gnad F."/>
            <person name="Macek B."/>
            <person name="Kumar C."/>
            <person name="Mortensen P."/>
            <person name="Mann M."/>
        </authorList>
    </citation>
    <scope>PHOSPHORYLATION [LARGE SCALE ANALYSIS] AT SER-342 AND SER-350</scope>
    <scope>IDENTIFICATION BY MASS SPECTROMETRY [LARGE SCALE ANALYSIS]</scope>
    <source>
        <tissue>Cervix carcinoma</tissue>
    </source>
</reference>
<reference key="13">
    <citation type="journal article" date="2008" name="J. Proteome Res.">
        <title>Combining protein-based IMAC, peptide-based IMAC, and MudPIT for efficient phosphoproteomic analysis.</title>
        <authorList>
            <person name="Cantin G.T."/>
            <person name="Yi W."/>
            <person name="Lu B."/>
            <person name="Park S.K."/>
            <person name="Xu T."/>
            <person name="Lee J.-D."/>
            <person name="Yates J.R. III"/>
        </authorList>
    </citation>
    <scope>IDENTIFICATION BY MASS SPECTROMETRY [LARGE SCALE ANALYSIS]</scope>
    <source>
        <tissue>Cervix carcinoma</tissue>
    </source>
</reference>
<reference key="14">
    <citation type="journal article" date="2008" name="J. Proteome Res.">
        <title>Phosphoproteome of resting human platelets.</title>
        <authorList>
            <person name="Zahedi R.P."/>
            <person name="Lewandrowski U."/>
            <person name="Wiesner J."/>
            <person name="Wortelkamp S."/>
            <person name="Moebius J."/>
            <person name="Schuetz C."/>
            <person name="Walter U."/>
            <person name="Gambaryan S."/>
            <person name="Sickmann A."/>
        </authorList>
    </citation>
    <scope>PHOSPHORYLATION [LARGE SCALE ANALYSIS] AT SER-1219</scope>
    <scope>IDENTIFICATION BY MASS SPECTROMETRY [LARGE SCALE ANALYSIS]</scope>
    <source>
        <tissue>Platelet</tissue>
    </source>
</reference>
<reference key="15">
    <citation type="journal article" date="2008" name="Proc. Natl. Acad. Sci. U.S.A.">
        <title>A quantitative atlas of mitotic phosphorylation.</title>
        <authorList>
            <person name="Dephoure N."/>
            <person name="Zhou C."/>
            <person name="Villen J."/>
            <person name="Beausoleil S.A."/>
            <person name="Bakalarski C.E."/>
            <person name="Elledge S.J."/>
            <person name="Gygi S.P."/>
        </authorList>
    </citation>
    <scope>PHOSPHORYLATION [LARGE SCALE ANALYSIS] AT SER-380; SER-383; SER-456; THR-610; SER-759; SER-761; SER-764; SER-1085; SER-1089; SER-1092; TYR-1094; SER-1147 AND SER-1306</scope>
    <scope>IDENTIFICATION BY MASS SPECTROMETRY [LARGE SCALE ANALYSIS]</scope>
    <source>
        <tissue>Cervix carcinoma</tissue>
    </source>
</reference>
<reference key="16">
    <citation type="journal article" date="2009" name="Anal. Chem.">
        <title>Lys-N and trypsin cover complementary parts of the phosphoproteome in a refined SCX-based approach.</title>
        <authorList>
            <person name="Gauci S."/>
            <person name="Helbig A.O."/>
            <person name="Slijper M."/>
            <person name="Krijgsveld J."/>
            <person name="Heck A.J."/>
            <person name="Mohammed S."/>
        </authorList>
    </citation>
    <scope>IDENTIFICATION BY MASS SPECTROMETRY [LARGE SCALE ANALYSIS]</scope>
</reference>
<reference key="17">
    <citation type="journal article" date="2009" name="Sci. Signal.">
        <title>Quantitative phosphoproteomic analysis of T cell receptor signaling reveals system-wide modulation of protein-protein interactions.</title>
        <authorList>
            <person name="Mayya V."/>
            <person name="Lundgren D.H."/>
            <person name="Hwang S.-I."/>
            <person name="Rezaul K."/>
            <person name="Wu L."/>
            <person name="Eng J.K."/>
            <person name="Rodionov V."/>
            <person name="Han D.K."/>
        </authorList>
    </citation>
    <scope>PHOSPHORYLATION [LARGE SCALE ANALYSIS] AT SER-380; SER-456; THR-610; SER-761 AND SER-1089</scope>
    <scope>IDENTIFICATION BY MASS SPECTROMETRY [LARGE SCALE ANALYSIS]</scope>
    <source>
        <tissue>Leukemic T-cell</tissue>
    </source>
</reference>
<reference key="18">
    <citation type="journal article" date="2009" name="Science">
        <title>Lysine acetylation targets protein complexes and co-regulates major cellular functions.</title>
        <authorList>
            <person name="Choudhary C."/>
            <person name="Kumar C."/>
            <person name="Gnad F."/>
            <person name="Nielsen M.L."/>
            <person name="Rehman M."/>
            <person name="Walther T.C."/>
            <person name="Olsen J.V."/>
            <person name="Mann M."/>
        </authorList>
    </citation>
    <scope>ACETYLATION [LARGE SCALE ANALYSIS] AT LYS-27 AND LYS-1196</scope>
    <scope>IDENTIFICATION BY MASS SPECTROMETRY [LARGE SCALE ANALYSIS]</scope>
</reference>
<reference key="19">
    <citation type="journal article" date="2010" name="Sci. Signal.">
        <title>Quantitative phosphoproteomics reveals widespread full phosphorylation site occupancy during mitosis.</title>
        <authorList>
            <person name="Olsen J.V."/>
            <person name="Vermeulen M."/>
            <person name="Santamaria A."/>
            <person name="Kumar C."/>
            <person name="Miller M.L."/>
            <person name="Jensen L.J."/>
            <person name="Gnad F."/>
            <person name="Cox J."/>
            <person name="Jensen T.S."/>
            <person name="Nigg E.A."/>
            <person name="Brunak S."/>
            <person name="Mann M."/>
        </authorList>
    </citation>
    <scope>PHOSPHORYLATION [LARGE SCALE ANALYSIS] AT SER-380; SER-808; SER-1219; THR-1353 AND SER-2113</scope>
    <scope>IDENTIFICATION BY MASS SPECTROMETRY [LARGE SCALE ANALYSIS]</scope>
    <source>
        <tissue>Cervix carcinoma</tissue>
    </source>
</reference>
<reference key="20">
    <citation type="journal article" date="2011" name="BMC Syst. Biol.">
        <title>Initial characterization of the human central proteome.</title>
        <authorList>
            <person name="Burkard T.R."/>
            <person name="Planyavsky M."/>
            <person name="Kaupe I."/>
            <person name="Breitwieser F.P."/>
            <person name="Buerckstuemmer T."/>
            <person name="Bennett K.L."/>
            <person name="Superti-Furga G."/>
            <person name="Colinge J."/>
        </authorList>
    </citation>
    <scope>IDENTIFICATION BY MASS SPECTROMETRY [LARGE SCALE ANALYSIS]</scope>
</reference>
<reference key="21">
    <citation type="journal article" date="2011" name="Sci. Signal.">
        <title>System-wide temporal characterization of the proteome and phosphoproteome of human embryonic stem cell differentiation.</title>
        <authorList>
            <person name="Rigbolt K.T."/>
            <person name="Prokhorova T.A."/>
            <person name="Akimov V."/>
            <person name="Henningsen J."/>
            <person name="Johansen P.T."/>
            <person name="Kratchmarova I."/>
            <person name="Kassem M."/>
            <person name="Mann M."/>
            <person name="Olsen J.V."/>
            <person name="Blagoev B."/>
        </authorList>
    </citation>
    <scope>PHOSPHORYLATION [LARGE SCALE ANALYSIS] AT SER-342; SER-350; SER-380; SER-1110 AND SER-1219</scope>
    <scope>IDENTIFICATION BY MASS SPECTROMETRY [LARGE SCALE ANALYSIS]</scope>
</reference>
<reference key="22">
    <citation type="journal article" date="2013" name="J. Proteome Res.">
        <title>Toward a comprehensive characterization of a human cancer cell phosphoproteome.</title>
        <authorList>
            <person name="Zhou H."/>
            <person name="Di Palma S."/>
            <person name="Preisinger C."/>
            <person name="Peng M."/>
            <person name="Polat A.N."/>
            <person name="Heck A.J."/>
            <person name="Mohammed S."/>
        </authorList>
    </citation>
    <scope>PHOSPHORYLATION [LARGE SCALE ANALYSIS] AT SER-18; SER-19; SER-30; SER-146; SER-166; SER-204; SER-342; SER-350; SER-363; SER-380; SER-383; SER-456; SER-761; SER-764; SER-908; SER-932; SER-1004; THR-1083; SER-1085; SER-1089; SER-1092; SER-1106; SER-1110; SER-1120; SER-1147; SER-1219; SER-1306; THR-1347; SER-1384; SER-1386; SER-1525; SER-1778; SER-2036; THR-2076; SER-2082 AND SER-2113</scope>
    <scope>IDENTIFICATION BY MASS SPECTROMETRY [LARGE SCALE ANALYSIS]</scope>
    <source>
        <tissue>Cervix carcinoma</tissue>
        <tissue>Erythroleukemia</tissue>
    </source>
</reference>
<reference key="23">
    <citation type="journal article" date="2014" name="J. Proteomics">
        <title>An enzyme assisted RP-RPLC approach for in-depth analysis of human liver phosphoproteome.</title>
        <authorList>
            <person name="Bian Y."/>
            <person name="Song C."/>
            <person name="Cheng K."/>
            <person name="Dong M."/>
            <person name="Wang F."/>
            <person name="Huang J."/>
            <person name="Sun D."/>
            <person name="Wang L."/>
            <person name="Ye M."/>
            <person name="Zou H."/>
        </authorList>
    </citation>
    <scope>PHOSPHORYLATION [LARGE SCALE ANALYSIS] AT SER-363; SER-908; SER-1219 AND SER-1328</scope>
    <scope>IDENTIFICATION BY MASS SPECTROMETRY [LARGE SCALE ANALYSIS]</scope>
    <source>
        <tissue>Liver</tissue>
    </source>
</reference>
<reference key="24">
    <citation type="journal article" date="2014" name="Mol. Cell. Proteomics">
        <title>Immunoaffinity enrichment and mass spectrometry analysis of protein methylation.</title>
        <authorList>
            <person name="Guo A."/>
            <person name="Gu H."/>
            <person name="Zhou J."/>
            <person name="Mulhern D."/>
            <person name="Wang Y."/>
            <person name="Lee K.A."/>
            <person name="Yang V."/>
            <person name="Aguiar M."/>
            <person name="Kornhauser J."/>
            <person name="Jia X."/>
            <person name="Ren J."/>
            <person name="Beausoleil S.A."/>
            <person name="Silva J.C."/>
            <person name="Vemulapalli V."/>
            <person name="Bedford M.T."/>
            <person name="Comb M.J."/>
        </authorList>
    </citation>
    <scope>METHYLATION [LARGE SCALE ANALYSIS] AT ARG-272 AND ARG-296</scope>
    <scope>IDENTIFICATION BY MASS SPECTROMETRY [LARGE SCALE ANALYSIS]</scope>
    <source>
        <tissue>Colon carcinoma</tissue>
    </source>
</reference>
<reference key="25">
    <citation type="journal article" date="2006" name="Science">
        <title>The consensus coding sequences of human breast and colorectal cancers.</title>
        <authorList>
            <person name="Sjoeblom T."/>
            <person name="Jones S."/>
            <person name="Wood L.D."/>
            <person name="Parsons D.W."/>
            <person name="Lin J."/>
            <person name="Barber T.D."/>
            <person name="Mandelker D."/>
            <person name="Leary R.J."/>
            <person name="Ptak J."/>
            <person name="Silliman N."/>
            <person name="Szabo S."/>
            <person name="Buckhaults P."/>
            <person name="Farrell C."/>
            <person name="Meeh P."/>
            <person name="Markowitz S.D."/>
            <person name="Willis J."/>
            <person name="Dawson D."/>
            <person name="Willson J.K.V."/>
            <person name="Gazdar A.F."/>
            <person name="Hartigan J."/>
            <person name="Wu L."/>
            <person name="Liu C."/>
            <person name="Parmigiani G."/>
            <person name="Park B.H."/>
            <person name="Bachman K.E."/>
            <person name="Papadopoulos N."/>
            <person name="Vogelstein B."/>
            <person name="Kinzler K.W."/>
            <person name="Velculescu V.E."/>
        </authorList>
    </citation>
    <scope>VARIANTS [LARGE SCALE ANALYSIS] ILE-1087 AND HIS-1152</scope>
</reference>
<accession>P48634</accession>
<accession>B0UX77</accession>
<accession>B0UZE9</accession>
<accession>B0UZL3</accession>
<accession>O95875</accession>
<accession>Q05BK4</accession>
<accession>Q4LE37</accession>
<accession>Q5SQ29</accession>
<accession>Q5SQ30</accession>
<accession>Q5ST84</accession>
<accession>Q5STX6</accession>
<accession>Q5STX7</accession>
<accession>Q68DW9</accession>
<accession>Q6P9P7</accession>
<accession>Q6PIN1</accession>
<accession>Q8MGQ9</accession>
<accession>Q96QC6</accession>
<comment type="function">
    <text evidence="5">May play a role in the regulation of pre-mRNA splicing.</text>
</comment>
<comment type="interaction">
    <interactant intactId="EBI-347545">
        <id>P48634</id>
    </interactant>
    <interactant intactId="EBI-930964">
        <id>P54253</id>
        <label>ATXN1</label>
    </interactant>
    <organismsDiffer>false</organismsDiffer>
    <experiments>4</experiments>
</comment>
<comment type="interaction">
    <interactant intactId="EBI-347545">
        <id>P48634</id>
    </interactant>
    <interactant intactId="EBI-852823">
        <id>P05412</id>
        <label>JUN</label>
    </interactant>
    <organismsDiffer>false</organismsDiffer>
    <experiments>2</experiments>
</comment>
<comment type="subcellular location">
    <subcellularLocation>
        <location evidence="8">Cytoplasm</location>
    </subcellularLocation>
    <subcellularLocation>
        <location evidence="8">Nucleus</location>
    </subcellularLocation>
</comment>
<comment type="alternative products">
    <event type="alternative splicing"/>
    <isoform>
        <id>P48634-1</id>
        <name>1</name>
        <sequence type="displayed"/>
    </isoform>
    <isoform>
        <id>P48634-2</id>
        <name>2</name>
        <sequence type="described" ref="VSP_015099 VSP_015100 VSP_015101 VSP_015102"/>
    </isoform>
    <isoform>
        <id>P48634-3</id>
        <name>3</name>
        <sequence type="described" ref="VSP_015100 VSP_015101 VSP_015102"/>
    </isoform>
    <isoform>
        <id>P48634-4</id>
        <name>4</name>
        <sequence type="described" ref="VSP_030865"/>
    </isoform>
</comment>
<comment type="tissue specificity">
    <text>Limited to cell-lines of leukemic origin.</text>
</comment>
<comment type="developmental stage">
    <text evidence="8">Broadly expressed during the 11th week of gestation, with highest levels in the central nervous system, spinal ganglia, osteoblasts and osteocytes (at protein level).</text>
</comment>
<comment type="sequence caution" evidence="17">
    <conflict type="frameshift">
        <sequence resource="EMBL-CDS" id="AAA35585"/>
    </conflict>
</comment>
<comment type="sequence caution" evidence="17">
    <conflict type="frameshift">
        <sequence resource="EMBL-CDS" id="AAA35586"/>
    </conflict>
</comment>
<comment type="sequence caution" evidence="17">
    <conflict type="erroneous initiation">
        <sequence resource="EMBL-CDS" id="BAE06116"/>
    </conflict>
    <text>Extended N-terminus.</text>
</comment>
<comment type="sequence caution" evidence="17">
    <conflict type="frameshift">
        <sequence resource="EMBL-CDS" id="CAA78744"/>
    </conflict>
</comment>
<dbReference type="EMBL" id="M33509">
    <property type="protein sequence ID" value="AAA35585.1"/>
    <property type="status" value="ALT_FRAME"/>
    <property type="molecule type" value="mRNA"/>
</dbReference>
<dbReference type="EMBL" id="M33518">
    <property type="protein sequence ID" value="AAA35586.1"/>
    <property type="status" value="ALT_FRAME"/>
    <property type="molecule type" value="Genomic_DNA"/>
</dbReference>
<dbReference type="EMBL" id="M33512">
    <property type="protein sequence ID" value="AAA35586.1"/>
    <property type="status" value="JOINED"/>
    <property type="molecule type" value="Genomic_DNA"/>
</dbReference>
<dbReference type="EMBL" id="AB210034">
    <property type="protein sequence ID" value="BAE06116.1"/>
    <property type="status" value="ALT_INIT"/>
    <property type="molecule type" value="mRNA"/>
</dbReference>
<dbReference type="EMBL" id="AF129756">
    <property type="protein sequence ID" value="AAD18086.1"/>
    <property type="molecule type" value="Genomic_DNA"/>
</dbReference>
<dbReference type="EMBL" id="CR354443">
    <property type="status" value="NOT_ANNOTATED_CDS"/>
    <property type="molecule type" value="Genomic_DNA"/>
</dbReference>
<dbReference type="EMBL" id="BA000025">
    <property type="protein sequence ID" value="BAB63391.1"/>
    <property type="molecule type" value="Genomic_DNA"/>
</dbReference>
<dbReference type="EMBL" id="AL662801">
    <property type="status" value="NOT_ANNOTATED_CDS"/>
    <property type="molecule type" value="Genomic_DNA"/>
</dbReference>
<dbReference type="EMBL" id="AL662847">
    <property type="status" value="NOT_ANNOTATED_CDS"/>
    <property type="molecule type" value="Genomic_DNA"/>
</dbReference>
<dbReference type="EMBL" id="AL805934">
    <property type="status" value="NOT_ANNOTATED_CDS"/>
    <property type="molecule type" value="Genomic_DNA"/>
</dbReference>
<dbReference type="EMBL" id="BX511262">
    <property type="status" value="NOT_ANNOTATED_CDS"/>
    <property type="molecule type" value="Genomic_DNA"/>
</dbReference>
<dbReference type="EMBL" id="CR753892">
    <property type="status" value="NOT_ANNOTATED_CDS"/>
    <property type="molecule type" value="Genomic_DNA"/>
</dbReference>
<dbReference type="EMBL" id="CR759761">
    <property type="status" value="NOT_ANNOTATED_CDS"/>
    <property type="molecule type" value="Genomic_DNA"/>
</dbReference>
<dbReference type="EMBL" id="CH471081">
    <property type="protein sequence ID" value="EAX03452.1"/>
    <property type="molecule type" value="Genomic_DNA"/>
</dbReference>
<dbReference type="EMBL" id="BC030127">
    <property type="protein sequence ID" value="AAH30127.1"/>
    <property type="molecule type" value="mRNA"/>
</dbReference>
<dbReference type="EMBL" id="BC032134">
    <property type="protein sequence ID" value="AAH32134.1"/>
    <property type="molecule type" value="mRNA"/>
</dbReference>
<dbReference type="EMBL" id="BC042295">
    <property type="protein sequence ID" value="AAH42295.1"/>
    <property type="molecule type" value="mRNA"/>
</dbReference>
<dbReference type="EMBL" id="BC060668">
    <property type="protein sequence ID" value="AAH60668.1"/>
    <property type="molecule type" value="mRNA"/>
</dbReference>
<dbReference type="EMBL" id="Z15025">
    <property type="protein sequence ID" value="CAA78744.1"/>
    <property type="status" value="ALT_FRAME"/>
    <property type="molecule type" value="Genomic_DNA"/>
</dbReference>
<dbReference type="EMBL" id="CR749245">
    <property type="protein sequence ID" value="CAH18101.1"/>
    <property type="molecule type" value="mRNA"/>
</dbReference>
<dbReference type="CCDS" id="CCDS4708.1">
    <molecule id="P48634-1"/>
</dbReference>
<dbReference type="PIR" id="B35098">
    <property type="entry name" value="B35098"/>
</dbReference>
<dbReference type="PIR" id="S37671">
    <property type="entry name" value="S37671"/>
</dbReference>
<dbReference type="RefSeq" id="NP_004629.3">
    <molecule id="P48634-1"/>
    <property type="nucleotide sequence ID" value="NM_004638.3"/>
</dbReference>
<dbReference type="RefSeq" id="NP_542417.2">
    <molecule id="P48634-1"/>
    <property type="nucleotide sequence ID" value="NM_080686.3"/>
</dbReference>
<dbReference type="SMR" id="P48634"/>
<dbReference type="BioGRID" id="113646">
    <property type="interactions" value="422"/>
</dbReference>
<dbReference type="FunCoup" id="P48634">
    <property type="interactions" value="2380"/>
</dbReference>
<dbReference type="IntAct" id="P48634">
    <property type="interactions" value="188"/>
</dbReference>
<dbReference type="MINT" id="P48634"/>
<dbReference type="STRING" id="9606.ENSP00000365201"/>
<dbReference type="GlyCosmos" id="P48634">
    <property type="glycosylation" value="2 sites, 1 glycan"/>
</dbReference>
<dbReference type="GlyGen" id="P48634">
    <property type="glycosylation" value="16 sites, 1 N-linked glycan (1 site), 1 O-linked glycan (7 sites)"/>
</dbReference>
<dbReference type="iPTMnet" id="P48634"/>
<dbReference type="MetOSite" id="P48634"/>
<dbReference type="PhosphoSitePlus" id="P48634"/>
<dbReference type="SwissPalm" id="P48634"/>
<dbReference type="BioMuta" id="PRRC2A"/>
<dbReference type="DMDM" id="296439424"/>
<dbReference type="jPOST" id="P48634"/>
<dbReference type="MassIVE" id="P48634"/>
<dbReference type="PaxDb" id="9606-ENSP00000365201"/>
<dbReference type="PeptideAtlas" id="P48634"/>
<dbReference type="ProteomicsDB" id="55913">
    <molecule id="P48634-1"/>
</dbReference>
<dbReference type="ProteomicsDB" id="55914">
    <molecule id="P48634-2"/>
</dbReference>
<dbReference type="ProteomicsDB" id="55915">
    <molecule id="P48634-3"/>
</dbReference>
<dbReference type="ProteomicsDB" id="55916">
    <molecule id="P48634-4"/>
</dbReference>
<dbReference type="Pumba" id="P48634"/>
<dbReference type="Antibodypedia" id="62364">
    <property type="antibodies" value="14 antibodies from 7 providers"/>
</dbReference>
<dbReference type="DNASU" id="7916"/>
<dbReference type="Ensembl" id="ENST00000376007.8">
    <molecule id="P48634-1"/>
    <property type="protein sequence ID" value="ENSP00000365175.4"/>
    <property type="gene ID" value="ENSG00000204469.13"/>
</dbReference>
<dbReference type="Ensembl" id="ENST00000376033.3">
    <molecule id="P48634-1"/>
    <property type="protein sequence ID" value="ENSP00000365201.2"/>
    <property type="gene ID" value="ENSG00000204469.13"/>
</dbReference>
<dbReference type="Ensembl" id="ENST00000383455.2">
    <property type="protein sequence ID" value="ENSP00000372947.2"/>
    <property type="gene ID" value="ENSG00000206427.11"/>
</dbReference>
<dbReference type="Ensembl" id="ENST00000383464.8">
    <property type="protein sequence ID" value="ENSP00000372956.4"/>
    <property type="gene ID" value="ENSG00000206427.11"/>
</dbReference>
<dbReference type="Ensembl" id="ENST00000414956.1">
    <property type="protein sequence ID" value="ENSP00000404619.1"/>
    <property type="gene ID" value="ENSG00000226618.9"/>
</dbReference>
<dbReference type="Ensembl" id="ENST00000416335.1">
    <property type="protein sequence ID" value="ENSP00000415182.1"/>
    <property type="gene ID" value="ENSG00000231370.9"/>
</dbReference>
<dbReference type="Ensembl" id="ENST00000422962.1">
    <property type="protein sequence ID" value="ENSP00000415363.1"/>
    <property type="gene ID" value="ENSG00000231825.9"/>
</dbReference>
<dbReference type="Ensembl" id="ENST00000428775.1">
    <property type="protein sequence ID" value="ENSP00000387910.1"/>
    <property type="gene ID" value="ENSG00000225164.9"/>
</dbReference>
<dbReference type="Ensembl" id="ENST00000430737.6">
    <property type="protein sequence ID" value="ENSP00000413977.2"/>
    <property type="gene ID" value="ENSG00000231825.9"/>
</dbReference>
<dbReference type="Ensembl" id="ENST00000432252.1">
    <property type="protein sequence ID" value="ENSP00000408226.1"/>
    <property type="gene ID" value="ENSG00000225748.9"/>
</dbReference>
<dbReference type="Ensembl" id="ENST00000435971.6">
    <property type="protein sequence ID" value="ENSP00000409444.2"/>
    <property type="gene ID" value="ENSG00000225164.9"/>
</dbReference>
<dbReference type="Ensembl" id="ENST00000439762.6">
    <property type="protein sequence ID" value="ENSP00000400540.2"/>
    <property type="gene ID" value="ENSG00000231370.9"/>
</dbReference>
<dbReference type="Ensembl" id="ENST00000454306.6">
    <property type="protein sequence ID" value="ENSP00000387477.2"/>
    <property type="gene ID" value="ENSG00000225748.9"/>
</dbReference>
<dbReference type="Ensembl" id="ENST00000458561.6">
    <property type="protein sequence ID" value="ENSP00000396812.2"/>
    <property type="gene ID" value="ENSG00000226618.9"/>
</dbReference>
<dbReference type="GeneID" id="7916"/>
<dbReference type="KEGG" id="hsa:7916"/>
<dbReference type="MANE-Select" id="ENST00000376033.3">
    <property type="protein sequence ID" value="ENSP00000365201.2"/>
    <property type="RefSeq nucleotide sequence ID" value="NM_004638.4"/>
    <property type="RefSeq protein sequence ID" value="NP_004629.3"/>
</dbReference>
<dbReference type="UCSC" id="uc003nvb.5">
    <molecule id="P48634-1"/>
    <property type="organism name" value="human"/>
</dbReference>
<dbReference type="AGR" id="HGNC:13918"/>
<dbReference type="CTD" id="7916"/>
<dbReference type="DisGeNET" id="7916"/>
<dbReference type="GeneCards" id="PRRC2A"/>
<dbReference type="HGNC" id="HGNC:13918">
    <property type="gene designation" value="PRRC2A"/>
</dbReference>
<dbReference type="HPA" id="ENSG00000204469">
    <property type="expression patterns" value="Low tissue specificity"/>
</dbReference>
<dbReference type="MIM" id="142580">
    <property type="type" value="gene"/>
</dbReference>
<dbReference type="neXtProt" id="NX_P48634"/>
<dbReference type="OpenTargets" id="ENSG00000204469"/>
<dbReference type="PharmGKB" id="PA25263"/>
<dbReference type="VEuPathDB" id="HostDB:ENSG00000204469"/>
<dbReference type="eggNOG" id="KOG4817">
    <property type="taxonomic scope" value="Eukaryota"/>
</dbReference>
<dbReference type="GeneTree" id="ENSGT00950000183161"/>
<dbReference type="HOGENOM" id="CLU_001247_1_0_1"/>
<dbReference type="InParanoid" id="P48634"/>
<dbReference type="OMA" id="TPHIWNH"/>
<dbReference type="OrthoDB" id="1939715at2759"/>
<dbReference type="PAN-GO" id="P48634">
    <property type="GO annotations" value="1 GO annotation based on evolutionary models"/>
</dbReference>
<dbReference type="PhylomeDB" id="P48634"/>
<dbReference type="TreeFam" id="TF328738"/>
<dbReference type="PathwayCommons" id="P48634"/>
<dbReference type="SignaLink" id="P48634"/>
<dbReference type="BioGRID-ORCS" id="7916">
    <property type="hits" value="383 hits in 1174 CRISPR screens"/>
</dbReference>
<dbReference type="CD-CODE" id="232F8A39">
    <property type="entry name" value="P-body"/>
</dbReference>
<dbReference type="CD-CODE" id="DEE660B4">
    <property type="entry name" value="Stress granule"/>
</dbReference>
<dbReference type="ChiTaRS" id="PRRC2A">
    <property type="organism name" value="human"/>
</dbReference>
<dbReference type="GeneWiki" id="BAT2"/>
<dbReference type="GenomeRNAi" id="7916"/>
<dbReference type="Pharos" id="P48634">
    <property type="development level" value="Tbio"/>
</dbReference>
<dbReference type="PRO" id="PR:P48634"/>
<dbReference type="Proteomes" id="UP000005640">
    <property type="component" value="Chromosome 6"/>
</dbReference>
<dbReference type="RNAct" id="P48634">
    <property type="molecule type" value="protein"/>
</dbReference>
<dbReference type="Bgee" id="ENSG00000204469">
    <property type="expression patterns" value="Expressed in right testis and 94 other cell types or tissues"/>
</dbReference>
<dbReference type="ExpressionAtlas" id="P48634">
    <property type="expression patterns" value="baseline and differential"/>
</dbReference>
<dbReference type="GO" id="GO:0005829">
    <property type="term" value="C:cytosol"/>
    <property type="evidence" value="ECO:0000314"/>
    <property type="project" value="HPA"/>
</dbReference>
<dbReference type="GO" id="GO:0070062">
    <property type="term" value="C:extracellular exosome"/>
    <property type="evidence" value="ECO:0007005"/>
    <property type="project" value="UniProtKB"/>
</dbReference>
<dbReference type="GO" id="GO:0016020">
    <property type="term" value="C:membrane"/>
    <property type="evidence" value="ECO:0007005"/>
    <property type="project" value="UniProtKB"/>
</dbReference>
<dbReference type="GO" id="GO:0005654">
    <property type="term" value="C:nucleoplasm"/>
    <property type="evidence" value="ECO:0000314"/>
    <property type="project" value="HPA"/>
</dbReference>
<dbReference type="GO" id="GO:0005886">
    <property type="term" value="C:plasma membrane"/>
    <property type="evidence" value="ECO:0000314"/>
    <property type="project" value="HPA"/>
</dbReference>
<dbReference type="GO" id="GO:0003723">
    <property type="term" value="F:RNA binding"/>
    <property type="evidence" value="ECO:0007005"/>
    <property type="project" value="UniProtKB"/>
</dbReference>
<dbReference type="GO" id="GO:0030154">
    <property type="term" value="P:cell differentiation"/>
    <property type="evidence" value="ECO:0000318"/>
    <property type="project" value="GO_Central"/>
</dbReference>
<dbReference type="InterPro" id="IPR009738">
    <property type="entry name" value="BAT2_N"/>
</dbReference>
<dbReference type="InterPro" id="IPR033184">
    <property type="entry name" value="PRRC2"/>
</dbReference>
<dbReference type="PANTHER" id="PTHR14038">
    <property type="entry name" value="BAT2 HLA-B-ASSOCIATED TRANSCRIPT 2"/>
    <property type="match status" value="1"/>
</dbReference>
<dbReference type="PANTHER" id="PTHR14038:SF5">
    <property type="entry name" value="PROTEIN PRRC2A"/>
    <property type="match status" value="1"/>
</dbReference>
<dbReference type="Pfam" id="PF07001">
    <property type="entry name" value="BAT2_N"/>
    <property type="match status" value="1"/>
</dbReference>
<organism>
    <name type="scientific">Homo sapiens</name>
    <name type="common">Human</name>
    <dbReference type="NCBI Taxonomy" id="9606"/>
    <lineage>
        <taxon>Eukaryota</taxon>
        <taxon>Metazoa</taxon>
        <taxon>Chordata</taxon>
        <taxon>Craniata</taxon>
        <taxon>Vertebrata</taxon>
        <taxon>Euteleostomi</taxon>
        <taxon>Mammalia</taxon>
        <taxon>Eutheria</taxon>
        <taxon>Euarchontoglires</taxon>
        <taxon>Primates</taxon>
        <taxon>Haplorrhini</taxon>
        <taxon>Catarrhini</taxon>
        <taxon>Hominidae</taxon>
        <taxon>Homo</taxon>
    </lineage>
</organism>
<keyword id="KW-0007">Acetylation</keyword>
<keyword id="KW-0025">Alternative splicing</keyword>
<keyword id="KW-0963">Cytoplasm</keyword>
<keyword id="KW-0488">Methylation</keyword>
<keyword id="KW-0539">Nucleus</keyword>
<keyword id="KW-0597">Phosphoprotein</keyword>
<keyword id="KW-1267">Proteomics identification</keyword>
<keyword id="KW-1185">Reference proteome</keyword>
<keyword id="KW-0677">Repeat</keyword>
<proteinExistence type="evidence at protein level"/>
<feature type="chain" id="PRO_0000064829" description="Protein PRRC2A">
    <location>
        <begin position="1"/>
        <end position="2157"/>
    </location>
</feature>
<feature type="repeat" description="1-1">
    <location>
        <begin position="41"/>
        <end position="95"/>
    </location>
</feature>
<feature type="repeat" description="1-2">
    <location>
        <begin position="98"/>
        <end position="154"/>
    </location>
</feature>
<feature type="repeat" description="1-3">
    <location>
        <begin position="281"/>
        <end position="336"/>
    </location>
</feature>
<feature type="repeat" description="2-1">
    <location>
        <begin position="337"/>
        <end position="430"/>
    </location>
</feature>
<feature type="repeat" description="2-2">
    <location>
        <begin position="488"/>
        <end position="561"/>
    </location>
</feature>
<feature type="repeat" description="1-4">
    <location>
        <begin position="1757"/>
        <end position="1812"/>
    </location>
</feature>
<feature type="repeat" description="3-1">
    <location>
        <begin position="1916"/>
        <end position="1965"/>
    </location>
</feature>
<feature type="repeat" description="3-2">
    <location>
        <begin position="1982"/>
        <end position="2031"/>
    </location>
</feature>
<feature type="repeat" description="3-3">
    <location>
        <begin position="2057"/>
        <end position="2106"/>
    </location>
</feature>
<feature type="region of interest" description="Disordered" evidence="2">
    <location>
        <begin position="1"/>
        <end position="20"/>
    </location>
</feature>
<feature type="region of interest" description="4 X 57 AA type A repeats">
    <location>
        <begin position="41"/>
        <end position="1812"/>
    </location>
</feature>
<feature type="region of interest" description="Disordered" evidence="2">
    <location>
        <begin position="49"/>
        <end position="713"/>
    </location>
</feature>
<feature type="region of interest" description="2 X type B repeats">
    <location>
        <begin position="337"/>
        <end position="561"/>
    </location>
</feature>
<feature type="region of interest" description="Disordered" evidence="2">
    <location>
        <begin position="740"/>
        <end position="1775"/>
    </location>
</feature>
<feature type="region of interest" description="Disordered" evidence="2">
    <location>
        <begin position="1806"/>
        <end position="1874"/>
    </location>
</feature>
<feature type="region of interest" description="3 X 50 AA type C repeats">
    <location>
        <begin position="1916"/>
        <end position="2106"/>
    </location>
</feature>
<feature type="region of interest" description="Disordered" evidence="2">
    <location>
        <begin position="2062"/>
        <end position="2093"/>
    </location>
</feature>
<feature type="region of interest" description="Disordered" evidence="2">
    <location>
        <begin position="2112"/>
        <end position="2157"/>
    </location>
</feature>
<feature type="compositionally biased region" description="Polar residues" evidence="2">
    <location>
        <begin position="98"/>
        <end position="122"/>
    </location>
</feature>
<feature type="compositionally biased region" description="Basic and acidic residues" evidence="2">
    <location>
        <begin position="178"/>
        <end position="189"/>
    </location>
</feature>
<feature type="compositionally biased region" description="Polar residues" evidence="2">
    <location>
        <begin position="190"/>
        <end position="207"/>
    </location>
</feature>
<feature type="compositionally biased region" description="Basic and acidic residues" evidence="2">
    <location>
        <begin position="210"/>
        <end position="232"/>
    </location>
</feature>
<feature type="compositionally biased region" description="Pro residues" evidence="2">
    <location>
        <begin position="253"/>
        <end position="267"/>
    </location>
</feature>
<feature type="compositionally biased region" description="Basic and acidic residues" evidence="2">
    <location>
        <begin position="306"/>
        <end position="316"/>
    </location>
</feature>
<feature type="compositionally biased region" description="Basic and acidic residues" evidence="2">
    <location>
        <begin position="329"/>
        <end position="342"/>
    </location>
</feature>
<feature type="compositionally biased region" description="Acidic residues" evidence="2">
    <location>
        <begin position="343"/>
        <end position="354"/>
    </location>
</feature>
<feature type="compositionally biased region" description="Basic and acidic residues" evidence="2">
    <location>
        <begin position="355"/>
        <end position="377"/>
    </location>
</feature>
<feature type="compositionally biased region" description="Pro residues" evidence="2">
    <location>
        <begin position="401"/>
        <end position="417"/>
    </location>
</feature>
<feature type="compositionally biased region" description="Basic and acidic residues" evidence="2">
    <location>
        <begin position="470"/>
        <end position="506"/>
    </location>
</feature>
<feature type="compositionally biased region" description="Pro residues" evidence="2">
    <location>
        <begin position="509"/>
        <end position="539"/>
    </location>
</feature>
<feature type="compositionally biased region" description="Low complexity" evidence="2">
    <location>
        <begin position="549"/>
        <end position="561"/>
    </location>
</feature>
<feature type="compositionally biased region" description="Pro residues" evidence="2">
    <location>
        <begin position="604"/>
        <end position="615"/>
    </location>
</feature>
<feature type="compositionally biased region" description="Low complexity" evidence="2">
    <location>
        <begin position="648"/>
        <end position="669"/>
    </location>
</feature>
<feature type="compositionally biased region" description="Pro residues" evidence="2">
    <location>
        <begin position="673"/>
        <end position="684"/>
    </location>
</feature>
<feature type="compositionally biased region" description="Pro residues" evidence="2">
    <location>
        <begin position="693"/>
        <end position="702"/>
    </location>
</feature>
<feature type="compositionally biased region" description="Basic and acidic residues" evidence="2">
    <location>
        <begin position="768"/>
        <end position="781"/>
    </location>
</feature>
<feature type="compositionally biased region" description="Basic and acidic residues" evidence="2">
    <location>
        <begin position="881"/>
        <end position="890"/>
    </location>
</feature>
<feature type="compositionally biased region" description="Basic and acidic residues" evidence="2">
    <location>
        <begin position="916"/>
        <end position="926"/>
    </location>
</feature>
<feature type="compositionally biased region" description="Low complexity" evidence="2">
    <location>
        <begin position="927"/>
        <end position="936"/>
    </location>
</feature>
<feature type="compositionally biased region" description="Basic and acidic residues" evidence="2">
    <location>
        <begin position="974"/>
        <end position="985"/>
    </location>
</feature>
<feature type="compositionally biased region" description="Basic and acidic residues" evidence="2">
    <location>
        <begin position="1050"/>
        <end position="1066"/>
    </location>
</feature>
<feature type="compositionally biased region" description="Basic and acidic residues" evidence="2">
    <location>
        <begin position="1110"/>
        <end position="1126"/>
    </location>
</feature>
<feature type="compositionally biased region" description="Pro residues" evidence="2">
    <location>
        <begin position="1137"/>
        <end position="1149"/>
    </location>
</feature>
<feature type="compositionally biased region" description="Pro residues" evidence="2">
    <location>
        <begin position="1195"/>
        <end position="1206"/>
    </location>
</feature>
<feature type="compositionally biased region" description="Low complexity" evidence="2">
    <location>
        <begin position="1291"/>
        <end position="1301"/>
    </location>
</feature>
<feature type="compositionally biased region" description="Basic and acidic residues" evidence="2">
    <location>
        <begin position="1331"/>
        <end position="1340"/>
    </location>
</feature>
<feature type="compositionally biased region" description="Gly residues" evidence="2">
    <location>
        <begin position="1353"/>
        <end position="1362"/>
    </location>
</feature>
<feature type="compositionally biased region" description="Basic and acidic residues" evidence="2">
    <location>
        <begin position="1373"/>
        <end position="1382"/>
    </location>
</feature>
<feature type="compositionally biased region" description="Gly residues" evidence="2">
    <location>
        <begin position="1400"/>
        <end position="1426"/>
    </location>
</feature>
<feature type="compositionally biased region" description="Pro residues" evidence="2">
    <location>
        <begin position="1448"/>
        <end position="1458"/>
    </location>
</feature>
<feature type="compositionally biased region" description="Polar residues" evidence="2">
    <location>
        <begin position="1479"/>
        <end position="1490"/>
    </location>
</feature>
<feature type="compositionally biased region" description="Pro residues" evidence="2">
    <location>
        <begin position="1507"/>
        <end position="1517"/>
    </location>
</feature>
<feature type="compositionally biased region" description="Polar residues" evidence="2">
    <location>
        <begin position="1645"/>
        <end position="1671"/>
    </location>
</feature>
<feature type="compositionally biased region" description="Pro residues" evidence="2">
    <location>
        <begin position="1699"/>
        <end position="1714"/>
    </location>
</feature>
<feature type="compositionally biased region" description="Basic and acidic residues" evidence="2">
    <location>
        <begin position="1715"/>
        <end position="1724"/>
    </location>
</feature>
<feature type="compositionally biased region" description="Low complexity" evidence="2">
    <location>
        <begin position="2073"/>
        <end position="2082"/>
    </location>
</feature>
<feature type="compositionally biased region" description="Basic and acidic residues" evidence="2">
    <location>
        <begin position="2135"/>
        <end position="2151"/>
    </location>
</feature>
<feature type="modified residue" description="Phosphoserine" evidence="25">
    <location>
        <position position="18"/>
    </location>
</feature>
<feature type="modified residue" description="Phosphoserine" evidence="25">
    <location>
        <position position="19"/>
    </location>
</feature>
<feature type="modified residue" description="N6-acetyllysine" evidence="21">
    <location>
        <position position="27"/>
    </location>
</feature>
<feature type="modified residue" description="Phosphoserine" evidence="25">
    <location>
        <position position="30"/>
    </location>
</feature>
<feature type="modified residue" description="N6-acetyllysine" evidence="1">
    <location>
        <position position="35"/>
    </location>
</feature>
<feature type="modified residue" description="Phosphoserine" evidence="25">
    <location>
        <position position="146"/>
    </location>
</feature>
<feature type="modified residue" description="Phosphoserine" evidence="25">
    <location>
        <position position="166"/>
    </location>
</feature>
<feature type="modified residue" description="Phosphoserine" evidence="25">
    <location>
        <position position="204"/>
    </location>
</feature>
<feature type="modified residue" description="Asymmetric dimethylarginine" evidence="26">
    <location>
        <position position="272"/>
    </location>
</feature>
<feature type="modified residue" description="Omega-N-methylarginine" evidence="26">
    <location>
        <position position="296"/>
    </location>
</feature>
<feature type="modified residue" description="Phosphoserine" evidence="18 24 25">
    <location>
        <position position="342"/>
    </location>
</feature>
<feature type="modified residue" description="Phosphoserine" evidence="18 24 25">
    <location>
        <position position="350"/>
    </location>
</feature>
<feature type="modified residue" description="Phosphoserine" evidence="25 27">
    <location>
        <position position="363"/>
    </location>
</feature>
<feature type="modified residue" description="Phosphoserine" evidence="20 22 23 24 25">
    <location>
        <position position="380"/>
    </location>
</feature>
<feature type="modified residue" description="Phosphoserine" evidence="20 25">
    <location>
        <position position="383"/>
    </location>
</feature>
<feature type="modified residue" description="Phosphoserine" evidence="20 22 25">
    <location>
        <position position="456"/>
    </location>
</feature>
<feature type="modified residue" description="Phosphothreonine" evidence="20 22">
    <location>
        <position position="610"/>
    </location>
</feature>
<feature type="modified residue" description="Phosphoserine" evidence="20">
    <location>
        <position position="759"/>
    </location>
</feature>
<feature type="modified residue" description="Phosphoserine" evidence="20 22 25">
    <location>
        <position position="761"/>
    </location>
</feature>
<feature type="modified residue" description="Phosphoserine" evidence="20 25">
    <location>
        <position position="764"/>
    </location>
</feature>
<feature type="modified residue" description="Phosphothreonine" evidence="1">
    <location>
        <position position="807"/>
    </location>
</feature>
<feature type="modified residue" description="Phosphoserine" evidence="23">
    <location>
        <position position="808"/>
    </location>
</feature>
<feature type="modified residue" description="Omega-N-methylarginine" evidence="1">
    <location>
        <position position="904"/>
    </location>
</feature>
<feature type="modified residue" description="Phosphoserine" evidence="25 27">
    <location>
        <position position="908"/>
    </location>
</feature>
<feature type="modified residue" description="Phosphoserine" evidence="25">
    <location>
        <position position="932"/>
    </location>
</feature>
<feature type="modified residue" description="Phosphothreonine" evidence="1">
    <location>
        <position position="997"/>
    </location>
</feature>
<feature type="modified residue" description="Phosphoserine" evidence="25">
    <location>
        <position position="1004"/>
    </location>
</feature>
<feature type="modified residue" description="Omega-N-methylarginine" evidence="1">
    <location>
        <position position="1066"/>
    </location>
</feature>
<feature type="modified residue" description="Phosphothreonine" evidence="25">
    <location>
        <position position="1083"/>
    </location>
</feature>
<feature type="modified residue" description="Phosphoserine" evidence="20 25">
    <location>
        <position position="1085"/>
    </location>
</feature>
<feature type="modified residue" description="Phosphoserine" evidence="20 22 25">
    <location>
        <position position="1089"/>
    </location>
</feature>
<feature type="modified residue" description="Phosphoserine" evidence="20 25">
    <location>
        <position position="1092"/>
    </location>
</feature>
<feature type="modified residue" description="Phosphotyrosine" evidence="20">
    <location>
        <position position="1094"/>
    </location>
</feature>
<feature type="modified residue" description="Phosphoserine" evidence="25">
    <location>
        <position position="1106"/>
    </location>
</feature>
<feature type="modified residue" description="Phosphoserine" evidence="24 25">
    <location>
        <position position="1110"/>
    </location>
</feature>
<feature type="modified residue" description="Phosphoserine" evidence="25">
    <location>
        <position position="1120"/>
    </location>
</feature>
<feature type="modified residue" description="Phosphoserine" evidence="20 25">
    <location>
        <position position="1147"/>
    </location>
</feature>
<feature type="modified residue" description="N6-acetyllysine" evidence="21">
    <location>
        <position position="1196"/>
    </location>
</feature>
<feature type="modified residue" description="Phosphoserine" evidence="19 23 24 25 27">
    <location>
        <position position="1219"/>
    </location>
</feature>
<feature type="modified residue" description="Phosphoserine" evidence="20 25">
    <location>
        <position position="1306"/>
    </location>
</feature>
<feature type="modified residue" description="Phosphoserine" evidence="1">
    <location>
        <position position="1310"/>
    </location>
</feature>
<feature type="modified residue" description="Phosphothreonine" evidence="1">
    <location>
        <position position="1323"/>
    </location>
</feature>
<feature type="modified residue" description="Phosphoserine" evidence="1">
    <location>
        <position position="1325"/>
    </location>
</feature>
<feature type="modified residue" description="Phosphoserine" evidence="27">
    <location>
        <position position="1328"/>
    </location>
</feature>
<feature type="modified residue" description="Phosphothreonine" evidence="25">
    <location>
        <position position="1347"/>
    </location>
</feature>
<feature type="modified residue" description="Phosphothreonine" evidence="23">
    <location>
        <position position="1353"/>
    </location>
</feature>
<feature type="modified residue" description="Phosphoserine" evidence="25">
    <location>
        <position position="1384"/>
    </location>
</feature>
<feature type="modified residue" description="Phosphoserine" evidence="25">
    <location>
        <position position="1386"/>
    </location>
</feature>
<feature type="modified residue" description="Phosphoserine" evidence="25">
    <location>
        <position position="1525"/>
    </location>
</feature>
<feature type="modified residue" description="Phosphoserine" evidence="25">
    <location>
        <position position="1778"/>
    </location>
</feature>
<feature type="modified residue" description="Phosphoserine" evidence="25">
    <location>
        <position position="2036"/>
    </location>
</feature>
<feature type="modified residue" description="Phosphothreonine" evidence="25">
    <location>
        <position position="2076"/>
    </location>
</feature>
<feature type="modified residue" description="Phosphoserine" evidence="25">
    <location>
        <position position="2082"/>
    </location>
</feature>
<feature type="modified residue" description="Phosphoserine" evidence="23 25">
    <location>
        <position position="2113"/>
    </location>
</feature>
<feature type="splice variant" id="VSP_015099" description="In isoform 2." evidence="16">
    <location>
        <begin position="413"/>
        <end position="424"/>
    </location>
</feature>
<feature type="splice variant" id="VSP_030865" description="In isoform 4." evidence="15">
    <location>
        <begin position="834"/>
        <end position="1457"/>
    </location>
</feature>
<feature type="splice variant" id="VSP_015100" description="In isoform 2 and isoform 3." evidence="16">
    <original>RSREFRSYREFRGDDGRGGGTGGPNHPPAPRGRTASETRSEGSEYEEIPKRRRQRGSETGSETHESDLAPSDKEAPTPKEGTLTQVPLAPPPPGAPPSP</original>
    <variation>QANSAVTESFEEMMGVEVGQGDQTTLLLPEAAMPARHGARVQSMRKSPSGAGSGAQKQAARPMRVIWLLQTRRLPHPRREHSPRSSRSPTTRSPTLHR</variation>
    <location>
        <begin position="1050"/>
        <end position="1148"/>
    </location>
</feature>
<feature type="splice variant" id="VSP_015101" description="In isoform 2 and isoform 3." evidence="16">
    <original>ARGGRVFTPRGVPSRRGRGGGRP</original>
    <variation>CPGVGESSLPEGAISPGPRRREA</variation>
    <location>
        <begin position="1155"/>
        <end position="1177"/>
    </location>
</feature>
<feature type="splice variant" id="VSP_015102" description="In isoform 2 and isoform 3." evidence="16">
    <original>AMDSQLHPNSGGF</original>
    <variation>SHGLSITSKQWRL</variation>
    <location>
        <begin position="1852"/>
        <end position="1864"/>
    </location>
</feature>
<feature type="sequence variant" id="VAR_023215" description="In dbSNP:rs1062968." evidence="11">
    <original>P</original>
    <variation>R</variation>
    <location>
        <position position="57"/>
    </location>
</feature>
<feature type="sequence variant" id="VAR_045992" description="In dbSNP:rs6921213.">
    <original>D</original>
    <variation>V</variation>
    <location>
        <position position="82"/>
    </location>
</feature>
<feature type="sequence variant" id="VAR_023216" description="In dbSNP:rs2280801." evidence="3 6">
    <original>P</original>
    <variation>L</variation>
    <location>
        <position position="106"/>
    </location>
</feature>
<feature type="sequence variant" id="VAR_045993" description="In dbSNP:rs17857493." evidence="7">
    <original>R</original>
    <variation>C</variation>
    <location>
        <position position="477"/>
    </location>
</feature>
<feature type="sequence variant" id="VAR_023217" description="In dbSNP:rs1046080." evidence="3 4 6 7 12 13 14">
    <original>T</original>
    <variation>K</variation>
    <location>
        <position position="544"/>
    </location>
</feature>
<feature type="sequence variant" id="VAR_023218" description="In dbSNP:rs2844469." evidence="12">
    <original>Q</original>
    <variation>K</variation>
    <location>
        <position position="694"/>
    </location>
</feature>
<feature type="sequence variant" id="VAR_023219" description="In dbSNP:rs1046081." evidence="11">
    <original>D</original>
    <variation>E</variation>
    <location>
        <position position="742"/>
    </location>
</feature>
<feature type="sequence variant" id="VAR_045994" description="In dbSNP:rs11538262.">
    <original>R</original>
    <variation>C</variation>
    <location>
        <position position="804"/>
    </location>
</feature>
<feature type="sequence variant" id="VAR_035796" description="In a breast cancer sample; somatic mutation; dbSNP:rs771808977." evidence="9">
    <original>T</original>
    <variation>I</variation>
    <location>
        <position position="1087"/>
    </location>
</feature>
<feature type="sequence variant" id="VAR_035797" description="In a breast cancer sample; somatic mutation; dbSNP:rs151148973." evidence="9">
    <original>R</original>
    <variation>H</variation>
    <location>
        <position position="1152"/>
    </location>
</feature>
<feature type="sequence variant" id="VAR_023220" description="In dbSNP:rs2736158." evidence="4">
    <original>G</original>
    <variation>A</variation>
    <location>
        <position position="1285"/>
    </location>
</feature>
<feature type="sequence variant" id="VAR_045995" description="In dbSNP:rs35464047.">
    <original>S</original>
    <variation>N</variation>
    <location>
        <position position="1407"/>
    </location>
</feature>
<feature type="sequence variant" id="VAR_023221" description="In dbSNP:rs2857703." evidence="12">
    <original>G</original>
    <variation>A</variation>
    <location>
        <position position="1415"/>
    </location>
</feature>
<feature type="sequence variant" id="VAR_023222" description="In dbSNP:rs2272593." evidence="3 4 6 7 10 11 12 13 14">
    <original>L</original>
    <variation>P</variation>
    <location>
        <position position="1503"/>
    </location>
</feature>
<feature type="sequence variant" id="VAR_045996" description="In dbSNP:rs34175432.">
    <original>G</original>
    <variation>D</variation>
    <location>
        <position position="1544"/>
    </location>
</feature>
<feature type="sequence variant" id="VAR_045997" description="In dbSNP:rs11538263.">
    <original>R</original>
    <variation>Q</variation>
    <location>
        <position position="1563"/>
    </location>
</feature>
<feature type="sequence variant" id="VAR_023223" description="In dbSNP:rs1046089." evidence="3 4 14">
    <original>R</original>
    <variation>H</variation>
    <location>
        <position position="1740"/>
    </location>
</feature>
<feature type="sequence variant" id="VAR_023224" description="In dbSNP:rs2844491." evidence="12">
    <original>G</original>
    <variation>A</variation>
    <location>
        <position position="1744"/>
    </location>
</feature>
<feature type="sequence variant" id="VAR_045998" description="In dbSNP:rs11538264.">
    <original>V</original>
    <variation>M</variation>
    <location>
        <position position="1774"/>
    </location>
</feature>
<feature type="sequence variant" id="VAR_023225" description="In dbSNP:rs11538264.">
    <original>V</original>
    <variation>M</variation>
    <location>
        <position position="1775"/>
    </location>
</feature>
<feature type="sequence variant" id="VAR_023226" description="In dbSNP:rs3132453." evidence="3 4 6 7 10 11 13 14">
    <original>L</original>
    <variation>V</variation>
    <location>
        <position position="1895"/>
    </location>
</feature>
<feature type="sequence variant" id="VAR_023227" description="In dbSNP:rs10885." evidence="3">
    <original>P</original>
    <variation>S</variation>
    <location>
        <position position="2006"/>
    </location>
</feature>
<feature type="sequence variant" id="VAR_056742" description="In dbSNP:rs34137317.">
    <original>R</original>
    <variation>W</variation>
    <location>
        <position position="2075"/>
    </location>
</feature>
<feature type="sequence variant" id="VAR_023228" description="In dbSNP:rs1046756." evidence="4">
    <original>P</original>
    <variation>L</variation>
    <location>
        <position position="2130"/>
    </location>
</feature>
<feature type="sequence conflict" description="In Ref. 8; CAA78744." evidence="17" ref="8">
    <original>P</original>
    <variation>A</variation>
    <location>
        <position position="57"/>
    </location>
</feature>
<feature type="sequence conflict" description="In Ref. 8; CAA78744." evidence="17" ref="8">
    <original>ESQPLPASQTPASNQPK</original>
    <variation>NRTTAGFTDACLQPAE</variation>
    <location>
        <begin position="107"/>
        <end position="123"/>
    </location>
</feature>
<feature type="sequence conflict" description="In Ref. 1; AAA35585/AAA35586." evidence="17" ref="1">
    <original>G</original>
    <variation>L</variation>
    <location>
        <position position="762"/>
    </location>
</feature>
<feature type="sequence conflict" description="In Ref. 8; CAA78744." evidence="17" ref="8">
    <original>G</original>
    <variation>R</variation>
    <location>
        <position position="762"/>
    </location>
</feature>
<feature type="sequence conflict" description="In Ref. 1; AAA35585/AAA35586 and 8; CAA78744." evidence="17" ref="1 8">
    <original>S</original>
    <variation>L</variation>
    <location>
        <position position="764"/>
    </location>
</feature>
<feature type="sequence conflict" description="In Ref. 8; CAA78744." evidence="17" ref="8">
    <original>A</original>
    <variation>T</variation>
    <location>
        <position position="846"/>
    </location>
</feature>
<feature type="sequence conflict" description="In Ref. 1; AAA35585/AAA35586 and 8; CAA78744." evidence="17" ref="1 8">
    <original>PARGVGSGGQ</original>
    <variation>LPASRSGA</variation>
    <location>
        <begin position="902"/>
        <end position="911"/>
    </location>
</feature>
<feature type="sequence conflict" description="In Ref. 7; AAH42295." evidence="17" ref="7">
    <original>R</original>
    <variation>G</variation>
    <location>
        <position position="934"/>
    </location>
</feature>
<feature type="sequence conflict" description="In Ref. 1; AAA35585/AAA35586." evidence="17" ref="1">
    <original>A</original>
    <variation>G</variation>
    <location>
        <position position="1049"/>
    </location>
</feature>
<feature type="sequence conflict" description="In Ref. 1; AAA35585/AAA35586." evidence="17" ref="1">
    <original>R</original>
    <variation>P</variation>
    <location>
        <position position="1300"/>
    </location>
</feature>
<feature type="sequence conflict" description="In Ref. 8; CAA78744." evidence="17" ref="8">
    <location>
        <position position="1461"/>
    </location>
</feature>
<feature type="sequence conflict" description="In Ref. 1; AAA35585/AAA35586." evidence="17" ref="1">
    <original>S</original>
    <variation>T</variation>
    <location>
        <position position="1626"/>
    </location>
</feature>
<feature type="sequence conflict" description="In Ref. 8; CAA78744." evidence="17" ref="8">
    <original>M</original>
    <variation>L</variation>
    <location sequence="P48634-3">
        <position position="1082"/>
    </location>
</feature>
<evidence type="ECO:0000250" key="1">
    <source>
        <dbReference type="UniProtKB" id="Q7TSC1"/>
    </source>
</evidence>
<evidence type="ECO:0000256" key="2">
    <source>
        <dbReference type="SAM" id="MobiDB-lite"/>
    </source>
</evidence>
<evidence type="ECO:0000269" key="3">
    <source>
    </source>
</evidence>
<evidence type="ECO:0000269" key="4">
    <source>
    </source>
</evidence>
<evidence type="ECO:0000269" key="5">
    <source>
    </source>
</evidence>
<evidence type="ECO:0000269" key="6">
    <source>
    </source>
</evidence>
<evidence type="ECO:0000269" key="7">
    <source>
    </source>
</evidence>
<evidence type="ECO:0000269" key="8">
    <source>
    </source>
</evidence>
<evidence type="ECO:0000269" key="9">
    <source>
    </source>
</evidence>
<evidence type="ECO:0000269" key="10">
    <source>
    </source>
</evidence>
<evidence type="ECO:0000269" key="11">
    <source>
    </source>
</evidence>
<evidence type="ECO:0000269" key="12">
    <source>
    </source>
</evidence>
<evidence type="ECO:0000269" key="13">
    <source ref="4"/>
</evidence>
<evidence type="ECO:0000269" key="14">
    <source ref="6"/>
</evidence>
<evidence type="ECO:0000303" key="15">
    <source>
    </source>
</evidence>
<evidence type="ECO:0000303" key="16">
    <source>
    </source>
</evidence>
<evidence type="ECO:0000305" key="17"/>
<evidence type="ECO:0007744" key="18">
    <source>
    </source>
</evidence>
<evidence type="ECO:0007744" key="19">
    <source>
    </source>
</evidence>
<evidence type="ECO:0007744" key="20">
    <source>
    </source>
</evidence>
<evidence type="ECO:0007744" key="21">
    <source>
    </source>
</evidence>
<evidence type="ECO:0007744" key="22">
    <source>
    </source>
</evidence>
<evidence type="ECO:0007744" key="23">
    <source>
    </source>
</evidence>
<evidence type="ECO:0007744" key="24">
    <source>
    </source>
</evidence>
<evidence type="ECO:0007744" key="25">
    <source>
    </source>
</evidence>
<evidence type="ECO:0007744" key="26">
    <source>
    </source>
</evidence>
<evidence type="ECO:0007744" key="27">
    <source>
    </source>
</evidence>